<evidence type="ECO:0000255" key="1">
    <source>
        <dbReference type="HAMAP-Rule" id="MF_00815"/>
    </source>
</evidence>
<name>ATPG_PECCP</name>
<feature type="chain" id="PRO_1000213043" description="ATP synthase gamma chain">
    <location>
        <begin position="1"/>
        <end position="287"/>
    </location>
</feature>
<dbReference type="EMBL" id="CP001657">
    <property type="protein sequence ID" value="ACT15270.1"/>
    <property type="molecule type" value="Genomic_DNA"/>
</dbReference>
<dbReference type="RefSeq" id="WP_015842330.1">
    <property type="nucleotide sequence ID" value="NC_012917.1"/>
</dbReference>
<dbReference type="SMR" id="C6DJH1"/>
<dbReference type="STRING" id="561230.PC1_4256"/>
<dbReference type="GeneID" id="67796244"/>
<dbReference type="KEGG" id="pct:PC1_4256"/>
<dbReference type="eggNOG" id="COG0224">
    <property type="taxonomic scope" value="Bacteria"/>
</dbReference>
<dbReference type="HOGENOM" id="CLU_050669_0_1_6"/>
<dbReference type="OrthoDB" id="9812769at2"/>
<dbReference type="Proteomes" id="UP000002736">
    <property type="component" value="Chromosome"/>
</dbReference>
<dbReference type="GO" id="GO:0005886">
    <property type="term" value="C:plasma membrane"/>
    <property type="evidence" value="ECO:0007669"/>
    <property type="project" value="UniProtKB-SubCell"/>
</dbReference>
<dbReference type="GO" id="GO:0045259">
    <property type="term" value="C:proton-transporting ATP synthase complex"/>
    <property type="evidence" value="ECO:0007669"/>
    <property type="project" value="UniProtKB-KW"/>
</dbReference>
<dbReference type="GO" id="GO:0005524">
    <property type="term" value="F:ATP binding"/>
    <property type="evidence" value="ECO:0007669"/>
    <property type="project" value="UniProtKB-UniRule"/>
</dbReference>
<dbReference type="GO" id="GO:0046933">
    <property type="term" value="F:proton-transporting ATP synthase activity, rotational mechanism"/>
    <property type="evidence" value="ECO:0007669"/>
    <property type="project" value="UniProtKB-UniRule"/>
</dbReference>
<dbReference type="GO" id="GO:0042777">
    <property type="term" value="P:proton motive force-driven plasma membrane ATP synthesis"/>
    <property type="evidence" value="ECO:0007669"/>
    <property type="project" value="UniProtKB-UniRule"/>
</dbReference>
<dbReference type="CDD" id="cd12151">
    <property type="entry name" value="F1-ATPase_gamma"/>
    <property type="match status" value="1"/>
</dbReference>
<dbReference type="FunFam" id="1.10.287.80:FF:000005">
    <property type="entry name" value="ATP synthase gamma chain"/>
    <property type="match status" value="2"/>
</dbReference>
<dbReference type="FunFam" id="3.40.1380.10:FF:000001">
    <property type="entry name" value="ATP synthase gamma chain"/>
    <property type="match status" value="1"/>
</dbReference>
<dbReference type="Gene3D" id="3.40.1380.10">
    <property type="match status" value="1"/>
</dbReference>
<dbReference type="Gene3D" id="1.10.287.80">
    <property type="entry name" value="ATP synthase, gamma subunit, helix hairpin domain"/>
    <property type="match status" value="2"/>
</dbReference>
<dbReference type="HAMAP" id="MF_00815">
    <property type="entry name" value="ATP_synth_gamma_bact"/>
    <property type="match status" value="1"/>
</dbReference>
<dbReference type="InterPro" id="IPR035968">
    <property type="entry name" value="ATP_synth_F1_ATPase_gsu"/>
</dbReference>
<dbReference type="InterPro" id="IPR000131">
    <property type="entry name" value="ATP_synth_F1_gsu"/>
</dbReference>
<dbReference type="InterPro" id="IPR023632">
    <property type="entry name" value="ATP_synth_F1_gsu_CS"/>
</dbReference>
<dbReference type="NCBIfam" id="TIGR01146">
    <property type="entry name" value="ATPsyn_F1gamma"/>
    <property type="match status" value="1"/>
</dbReference>
<dbReference type="NCBIfam" id="NF004144">
    <property type="entry name" value="PRK05621.1-1"/>
    <property type="match status" value="1"/>
</dbReference>
<dbReference type="PANTHER" id="PTHR11693">
    <property type="entry name" value="ATP SYNTHASE GAMMA CHAIN"/>
    <property type="match status" value="1"/>
</dbReference>
<dbReference type="PANTHER" id="PTHR11693:SF22">
    <property type="entry name" value="ATP SYNTHASE SUBUNIT GAMMA, MITOCHONDRIAL"/>
    <property type="match status" value="1"/>
</dbReference>
<dbReference type="Pfam" id="PF00231">
    <property type="entry name" value="ATP-synt"/>
    <property type="match status" value="1"/>
</dbReference>
<dbReference type="PRINTS" id="PR00126">
    <property type="entry name" value="ATPASEGAMMA"/>
</dbReference>
<dbReference type="SUPFAM" id="SSF52943">
    <property type="entry name" value="ATP synthase (F1-ATPase), gamma subunit"/>
    <property type="match status" value="1"/>
</dbReference>
<dbReference type="PROSITE" id="PS00153">
    <property type="entry name" value="ATPASE_GAMMA"/>
    <property type="match status" value="1"/>
</dbReference>
<accession>C6DJH1</accession>
<comment type="function">
    <text evidence="1">Produces ATP from ADP in the presence of a proton gradient across the membrane. The gamma chain is believed to be important in regulating ATPase activity and the flow of protons through the CF(0) complex.</text>
</comment>
<comment type="subunit">
    <text evidence="1">F-type ATPases have 2 components, CF(1) - the catalytic core - and CF(0) - the membrane proton channel. CF(1) has five subunits: alpha(3), beta(3), gamma(1), delta(1), epsilon(1). CF(0) has three main subunits: a, b and c.</text>
</comment>
<comment type="subcellular location">
    <subcellularLocation>
        <location evidence="1">Cell inner membrane</location>
        <topology evidence="1">Peripheral membrane protein</topology>
    </subcellularLocation>
</comment>
<comment type="similarity">
    <text evidence="1">Belongs to the ATPase gamma chain family.</text>
</comment>
<keyword id="KW-0066">ATP synthesis</keyword>
<keyword id="KW-0997">Cell inner membrane</keyword>
<keyword id="KW-1003">Cell membrane</keyword>
<keyword id="KW-0139">CF(1)</keyword>
<keyword id="KW-0375">Hydrogen ion transport</keyword>
<keyword id="KW-0406">Ion transport</keyword>
<keyword id="KW-0472">Membrane</keyword>
<keyword id="KW-0813">Transport</keyword>
<organism>
    <name type="scientific">Pectobacterium carotovorum subsp. carotovorum (strain PC1)</name>
    <dbReference type="NCBI Taxonomy" id="561230"/>
    <lineage>
        <taxon>Bacteria</taxon>
        <taxon>Pseudomonadati</taxon>
        <taxon>Pseudomonadota</taxon>
        <taxon>Gammaproteobacteria</taxon>
        <taxon>Enterobacterales</taxon>
        <taxon>Pectobacteriaceae</taxon>
        <taxon>Pectobacterium</taxon>
    </lineage>
</organism>
<reference key="1">
    <citation type="submission" date="2009-07" db="EMBL/GenBank/DDBJ databases">
        <title>Complete sequence of Pectobacterium carotovorum subsp. carotovorum PC1.</title>
        <authorList>
            <consortium name="US DOE Joint Genome Institute"/>
            <person name="Lucas S."/>
            <person name="Copeland A."/>
            <person name="Lapidus A."/>
            <person name="Glavina del Rio T."/>
            <person name="Tice H."/>
            <person name="Bruce D."/>
            <person name="Goodwin L."/>
            <person name="Pitluck S."/>
            <person name="Munk A.C."/>
            <person name="Brettin T."/>
            <person name="Detter J.C."/>
            <person name="Han C."/>
            <person name="Tapia R."/>
            <person name="Larimer F."/>
            <person name="Land M."/>
            <person name="Hauser L."/>
            <person name="Kyrpides N."/>
            <person name="Mikhailova N."/>
            <person name="Balakrishnan V."/>
            <person name="Glasner J."/>
            <person name="Perna N.T."/>
        </authorList>
    </citation>
    <scope>NUCLEOTIDE SEQUENCE [LARGE SCALE GENOMIC DNA]</scope>
    <source>
        <strain>PC1</strain>
    </source>
</reference>
<gene>
    <name evidence="1" type="primary">atpG</name>
    <name type="ordered locus">PC1_4256</name>
</gene>
<protein>
    <recommendedName>
        <fullName evidence="1">ATP synthase gamma chain</fullName>
    </recommendedName>
    <alternativeName>
        <fullName evidence="1">ATP synthase F1 sector gamma subunit</fullName>
    </alternativeName>
    <alternativeName>
        <fullName evidence="1">F-ATPase gamma subunit</fullName>
    </alternativeName>
</protein>
<proteinExistence type="inferred from homology"/>
<sequence length="287" mass="31432">MAGAKEIRSKIASVQNTQKITKAMEMVAASKMRKSQDRMAASRPYAETIRNVIGHLALGNLEYKHPYLEERDVKRVGYLVVSTDRGLCGGLNINLFKKLLADMKSWSDKGVETDLALIGSKAVSFFGSVGGNIVAQVTGMGDNPSVSELIGPVKVMLQAYDEGRLDKLYIVSNKFINTMSQEPLVVQVLPLPPSDDGELKKKSWDYLYEPDPKSLLDTLLRRYVESQVYQGVVENLASEQAARMVAMKAATDNGGSLIKELQLVYNKARQASITQELTEIVGGASAV</sequence>